<accession>Q6AYT0</accession>
<reference key="1">
    <citation type="journal article" date="2004" name="Genome Res.">
        <title>The status, quality, and expansion of the NIH full-length cDNA project: the Mammalian Gene Collection (MGC).</title>
        <authorList>
            <consortium name="The MGC Project Team"/>
        </authorList>
    </citation>
    <scope>NUCLEOTIDE SEQUENCE [LARGE SCALE MRNA]</scope>
    <source>
        <tissue>Kidney</tissue>
    </source>
</reference>
<evidence type="ECO:0000250" key="1"/>
<evidence type="ECO:0000250" key="2">
    <source>
        <dbReference type="UniProtKB" id="P47199"/>
    </source>
</evidence>
<evidence type="ECO:0000250" key="3">
    <source>
        <dbReference type="UniProtKB" id="Q08257"/>
    </source>
</evidence>
<evidence type="ECO:0000305" key="4"/>
<dbReference type="EC" id="1.6.5.5"/>
<dbReference type="EMBL" id="BC078927">
    <property type="protein sequence ID" value="AAH78927.1"/>
    <property type="molecule type" value="mRNA"/>
</dbReference>
<dbReference type="RefSeq" id="NP_001012183.1">
    <property type="nucleotide sequence ID" value="NM_001012183.2"/>
</dbReference>
<dbReference type="RefSeq" id="XP_006233582.1">
    <property type="nucleotide sequence ID" value="XM_006233520.5"/>
</dbReference>
<dbReference type="SMR" id="Q6AYT0"/>
<dbReference type="FunCoup" id="Q6AYT0">
    <property type="interactions" value="1843"/>
</dbReference>
<dbReference type="STRING" id="10116.ENSRNOP00000038188"/>
<dbReference type="iPTMnet" id="Q6AYT0"/>
<dbReference type="PhosphoSitePlus" id="Q6AYT0"/>
<dbReference type="jPOST" id="Q6AYT0"/>
<dbReference type="PaxDb" id="10116-ENSRNOP00000038188"/>
<dbReference type="Ensembl" id="ENSRNOT00000032808.4">
    <property type="protein sequence ID" value="ENSRNOP00000038188.3"/>
    <property type="gene ID" value="ENSRNOG00000028319.4"/>
</dbReference>
<dbReference type="GeneID" id="362061"/>
<dbReference type="KEGG" id="rno:362061"/>
<dbReference type="AGR" id="RGD:1311639"/>
<dbReference type="CTD" id="1429"/>
<dbReference type="RGD" id="1311639">
    <property type="gene designation" value="Cryz"/>
</dbReference>
<dbReference type="eggNOG" id="KOG1198">
    <property type="taxonomic scope" value="Eukaryota"/>
</dbReference>
<dbReference type="GeneTree" id="ENSGT00940000154882"/>
<dbReference type="HOGENOM" id="CLU_026673_3_1_1"/>
<dbReference type="InParanoid" id="Q6AYT0"/>
<dbReference type="OrthoDB" id="23349at9989"/>
<dbReference type="PhylomeDB" id="Q6AYT0"/>
<dbReference type="TreeFam" id="TF314255"/>
<dbReference type="PRO" id="PR:Q6AYT0"/>
<dbReference type="Proteomes" id="UP000002494">
    <property type="component" value="Chromosome 2"/>
</dbReference>
<dbReference type="Bgee" id="ENSRNOG00000028319">
    <property type="expression patterns" value="Expressed in kidney and 20 other cell types or tissues"/>
</dbReference>
<dbReference type="GO" id="GO:0005829">
    <property type="term" value="C:cytosol"/>
    <property type="evidence" value="ECO:0000250"/>
    <property type="project" value="UniProtKB"/>
</dbReference>
<dbReference type="GO" id="GO:0042802">
    <property type="term" value="F:identical protein binding"/>
    <property type="evidence" value="ECO:0000266"/>
    <property type="project" value="RGD"/>
</dbReference>
<dbReference type="GO" id="GO:0003730">
    <property type="term" value="F:mRNA 3'-UTR binding"/>
    <property type="evidence" value="ECO:0000314"/>
    <property type="project" value="RGD"/>
</dbReference>
<dbReference type="GO" id="GO:0070402">
    <property type="term" value="F:NADPH binding"/>
    <property type="evidence" value="ECO:0000250"/>
    <property type="project" value="UniProtKB"/>
</dbReference>
<dbReference type="GO" id="GO:0003960">
    <property type="term" value="F:NADPH:quinone reductase activity"/>
    <property type="evidence" value="ECO:0000250"/>
    <property type="project" value="UniProtKB"/>
</dbReference>
<dbReference type="GO" id="GO:0008270">
    <property type="term" value="F:zinc ion binding"/>
    <property type="evidence" value="ECO:0007669"/>
    <property type="project" value="InterPro"/>
</dbReference>
<dbReference type="GO" id="GO:0051289">
    <property type="term" value="P:protein homotetramerization"/>
    <property type="evidence" value="ECO:0000266"/>
    <property type="project" value="RGD"/>
</dbReference>
<dbReference type="GO" id="GO:0042178">
    <property type="term" value="P:xenobiotic catabolic process"/>
    <property type="evidence" value="ECO:0000250"/>
    <property type="project" value="UniProtKB"/>
</dbReference>
<dbReference type="CDD" id="cd08253">
    <property type="entry name" value="zeta_crystallin"/>
    <property type="match status" value="1"/>
</dbReference>
<dbReference type="FunFam" id="3.90.180.10:FF:000072">
    <property type="entry name" value="Crystallin zeta"/>
    <property type="match status" value="1"/>
</dbReference>
<dbReference type="FunFam" id="3.90.180.10:FF:000016">
    <property type="entry name" value="Quinone oxidoreductase"/>
    <property type="match status" value="1"/>
</dbReference>
<dbReference type="FunFam" id="3.40.50.720:FF:000244">
    <property type="entry name" value="quinone oxidoreductase"/>
    <property type="match status" value="1"/>
</dbReference>
<dbReference type="Gene3D" id="3.90.180.10">
    <property type="entry name" value="Medium-chain alcohol dehydrogenases, catalytic domain"/>
    <property type="match status" value="1"/>
</dbReference>
<dbReference type="Gene3D" id="3.40.50.720">
    <property type="entry name" value="NAD(P)-binding Rossmann-like Domain"/>
    <property type="match status" value="1"/>
</dbReference>
<dbReference type="InterPro" id="IPR013149">
    <property type="entry name" value="ADH-like_C"/>
</dbReference>
<dbReference type="InterPro" id="IPR013154">
    <property type="entry name" value="ADH-like_N"/>
</dbReference>
<dbReference type="InterPro" id="IPR011032">
    <property type="entry name" value="GroES-like_sf"/>
</dbReference>
<dbReference type="InterPro" id="IPR036291">
    <property type="entry name" value="NAD(P)-bd_dom_sf"/>
</dbReference>
<dbReference type="InterPro" id="IPR020843">
    <property type="entry name" value="PKS_ER"/>
</dbReference>
<dbReference type="InterPro" id="IPR002364">
    <property type="entry name" value="Quin_OxRdtase/zeta-crystal_CS"/>
</dbReference>
<dbReference type="InterPro" id="IPR051603">
    <property type="entry name" value="Zinc-ADH_QOR/CCCR"/>
</dbReference>
<dbReference type="PANTHER" id="PTHR44154">
    <property type="entry name" value="QUINONE OXIDOREDUCTASE"/>
    <property type="match status" value="1"/>
</dbReference>
<dbReference type="PANTHER" id="PTHR44154:SF1">
    <property type="entry name" value="QUINONE OXIDOREDUCTASE"/>
    <property type="match status" value="1"/>
</dbReference>
<dbReference type="Pfam" id="PF08240">
    <property type="entry name" value="ADH_N"/>
    <property type="match status" value="1"/>
</dbReference>
<dbReference type="Pfam" id="PF00107">
    <property type="entry name" value="ADH_zinc_N"/>
    <property type="match status" value="1"/>
</dbReference>
<dbReference type="SMART" id="SM00829">
    <property type="entry name" value="PKS_ER"/>
    <property type="match status" value="1"/>
</dbReference>
<dbReference type="SUPFAM" id="SSF50129">
    <property type="entry name" value="GroES-like"/>
    <property type="match status" value="1"/>
</dbReference>
<dbReference type="SUPFAM" id="SSF51735">
    <property type="entry name" value="NAD(P)-binding Rossmann-fold domains"/>
    <property type="match status" value="1"/>
</dbReference>
<dbReference type="PROSITE" id="PS01162">
    <property type="entry name" value="QOR_ZETA_CRYSTAL"/>
    <property type="match status" value="1"/>
</dbReference>
<name>QOR_RAT</name>
<keyword id="KW-0007">Acetylation</keyword>
<keyword id="KW-0963">Cytoplasm</keyword>
<keyword id="KW-0521">NADP</keyword>
<keyword id="KW-0560">Oxidoreductase</keyword>
<keyword id="KW-1185">Reference proteome</keyword>
<keyword id="KW-0694">RNA-binding</keyword>
<protein>
    <recommendedName>
        <fullName>Quinone oxidoreductase</fullName>
        <ecNumber>1.6.5.5</ecNumber>
    </recommendedName>
    <alternativeName>
        <fullName>NADPH:quinone reductase</fullName>
    </alternativeName>
    <alternativeName>
        <fullName>Zeta-crystallin</fullName>
    </alternativeName>
</protein>
<proteinExistence type="evidence at transcript level"/>
<organism>
    <name type="scientific">Rattus norvegicus</name>
    <name type="common">Rat</name>
    <dbReference type="NCBI Taxonomy" id="10116"/>
    <lineage>
        <taxon>Eukaryota</taxon>
        <taxon>Metazoa</taxon>
        <taxon>Chordata</taxon>
        <taxon>Craniata</taxon>
        <taxon>Vertebrata</taxon>
        <taxon>Euteleostomi</taxon>
        <taxon>Mammalia</taxon>
        <taxon>Eutheria</taxon>
        <taxon>Euarchontoglires</taxon>
        <taxon>Glires</taxon>
        <taxon>Rodentia</taxon>
        <taxon>Myomorpha</taxon>
        <taxon>Muroidea</taxon>
        <taxon>Muridae</taxon>
        <taxon>Murinae</taxon>
        <taxon>Rattus</taxon>
    </lineage>
</organism>
<comment type="function">
    <text evidence="1">Does not have alcohol dehydrogenase activity. Binds NADP and acts through a one-electron transfer process. Orthoquinones, such as 1,2-naphthoquinone or 9,10-phenanthrenequinone, are the best substrates (in vitro). May act in the detoxification of xenobiotics. Interacts with (AU)-rich elements (ARE) in the 3'-UTR of target mRNA species and enhances their stability. NADPH binding interferes with mRNA binding (By similarity).</text>
</comment>
<comment type="catalytic activity">
    <reaction>
        <text>2 a quinone + NADPH + H(+) = 2 a 1,4-benzosemiquinone + NADP(+)</text>
        <dbReference type="Rhea" id="RHEA:14269"/>
        <dbReference type="ChEBI" id="CHEBI:15378"/>
        <dbReference type="ChEBI" id="CHEBI:57783"/>
        <dbReference type="ChEBI" id="CHEBI:58349"/>
        <dbReference type="ChEBI" id="CHEBI:132124"/>
        <dbReference type="ChEBI" id="CHEBI:134225"/>
        <dbReference type="EC" id="1.6.5.5"/>
    </reaction>
</comment>
<comment type="subunit">
    <text evidence="1">Homotetramer.</text>
</comment>
<comment type="subcellular location">
    <subcellularLocation>
        <location evidence="1">Cytoplasm</location>
    </subcellularLocation>
</comment>
<comment type="similarity">
    <text evidence="4">Belongs to the zinc-containing alcohol dehydrogenase family. Quinone oxidoreductase subfamily.</text>
</comment>
<gene>
    <name type="primary">Cryz</name>
</gene>
<feature type="initiator methionine" description="Removed" evidence="3">
    <location>
        <position position="1"/>
    </location>
</feature>
<feature type="chain" id="PRO_0000160910" description="Quinone oxidoreductase">
    <location>
        <begin position="2"/>
        <end position="329"/>
    </location>
</feature>
<feature type="binding site" evidence="1">
    <location>
        <position position="53"/>
    </location>
    <ligand>
        <name>NADP(+)</name>
        <dbReference type="ChEBI" id="CHEBI:58349"/>
    </ligand>
</feature>
<feature type="binding site" evidence="1">
    <location>
        <begin position="158"/>
        <end position="161"/>
    </location>
    <ligand>
        <name>NADP(+)</name>
        <dbReference type="ChEBI" id="CHEBI:58349"/>
    </ligand>
</feature>
<feature type="binding site" evidence="1">
    <location>
        <position position="181"/>
    </location>
    <ligand>
        <name>NADP(+)</name>
        <dbReference type="ChEBI" id="CHEBI:58349"/>
    </ligand>
</feature>
<feature type="binding site" evidence="1">
    <location>
        <position position="200"/>
    </location>
    <ligand>
        <name>NADP(+)</name>
        <dbReference type="ChEBI" id="CHEBI:58349"/>
    </ligand>
</feature>
<feature type="binding site" evidence="1">
    <location>
        <position position="229"/>
    </location>
    <ligand>
        <name>NADP(+)</name>
        <dbReference type="ChEBI" id="CHEBI:58349"/>
    </ligand>
</feature>
<feature type="binding site" evidence="1">
    <location>
        <begin position="246"/>
        <end position="249"/>
    </location>
    <ligand>
        <name>NADP(+)</name>
        <dbReference type="ChEBI" id="CHEBI:58349"/>
    </ligand>
</feature>
<feature type="binding site" evidence="1">
    <location>
        <begin position="269"/>
        <end position="271"/>
    </location>
    <ligand>
        <name>NADP(+)</name>
        <dbReference type="ChEBI" id="CHEBI:58349"/>
    </ligand>
</feature>
<feature type="modified residue" description="N-acetylalanine" evidence="3">
    <location>
        <position position="2"/>
    </location>
</feature>
<feature type="modified residue" description="N6-acetyllysine" evidence="3">
    <location>
        <position position="23"/>
    </location>
</feature>
<feature type="modified residue" description="N6-succinyllysine" evidence="2">
    <location>
        <position position="296"/>
    </location>
</feature>
<sequence>MATGQKLMRAIRVFEFGGPEVLKLQSDVVVPAPQSHQVLIKVHACGVNPVETYIRSGTYSRKPALPYTPGSDVAGIIESVGDGVSAFKKGDRVFCFSTVSGGYAEFALSADNTTYPLPETLDFRQGAALGIPYFTACRALFHSARARAGESVLVHGASGGVGLATCQIARAHGLKVLGTAGSEEGKKLVLQNGAHEVFNHKEANYIDKIKTSAGDKGVDVIIEMLANKNLSNDLKLLSCGGRVIVVGCRGSIEINPRDTMAKETSIIGVSLFSSTKEEFQQFAGILQAGIEKGWVKPVIGSEYPLEKAAQAHEDIIHSSGKMGKMILLL</sequence>